<gene>
    <name evidence="1" type="primary">rihB</name>
    <name type="ordered locus">Ecok1_20660</name>
    <name type="ORF">APECO1_43912</name>
</gene>
<protein>
    <recommendedName>
        <fullName evidence="1">Pyrimidine-specific ribonucleoside hydrolase RihB</fullName>
        <ecNumber evidence="1">3.2.2.8</ecNumber>
    </recommendedName>
    <alternativeName>
        <fullName evidence="1">Cytidine/uridine-specific hydrolase</fullName>
    </alternativeName>
</protein>
<name>RIHB_ECOK1</name>
<reference key="1">
    <citation type="journal article" date="2007" name="J. Bacteriol.">
        <title>The genome sequence of avian pathogenic Escherichia coli strain O1:K1:H7 shares strong similarities with human extraintestinal pathogenic E. coli genomes.</title>
        <authorList>
            <person name="Johnson T.J."/>
            <person name="Kariyawasam S."/>
            <person name="Wannemuehler Y."/>
            <person name="Mangiamele P."/>
            <person name="Johnson S.J."/>
            <person name="Doetkott C."/>
            <person name="Skyberg J.A."/>
            <person name="Lynne A.M."/>
            <person name="Johnson J.R."/>
            <person name="Nolan L.K."/>
        </authorList>
    </citation>
    <scope>NUCLEOTIDE SEQUENCE [LARGE SCALE GENOMIC DNA]</scope>
</reference>
<organism>
    <name type="scientific">Escherichia coli O1:K1 / APEC</name>
    <dbReference type="NCBI Taxonomy" id="405955"/>
    <lineage>
        <taxon>Bacteria</taxon>
        <taxon>Pseudomonadati</taxon>
        <taxon>Pseudomonadota</taxon>
        <taxon>Gammaproteobacteria</taxon>
        <taxon>Enterobacterales</taxon>
        <taxon>Enterobacteriaceae</taxon>
        <taxon>Escherichia</taxon>
    </lineage>
</organism>
<keyword id="KW-0106">Calcium</keyword>
<keyword id="KW-0326">Glycosidase</keyword>
<keyword id="KW-0378">Hydrolase</keyword>
<keyword id="KW-0479">Metal-binding</keyword>
<keyword id="KW-1185">Reference proteome</keyword>
<proteinExistence type="inferred from homology"/>
<feature type="chain" id="PRO_1000024411" description="Pyrimidine-specific ribonucleoside hydrolase RihB">
    <location>
        <begin position="1"/>
        <end position="313"/>
    </location>
</feature>
<feature type="active site" description="Proton acceptor" evidence="1">
    <location>
        <position position="11"/>
    </location>
</feature>
<feature type="binding site" evidence="1">
    <location>
        <position position="11"/>
    </location>
    <ligand>
        <name>Ca(2+)</name>
        <dbReference type="ChEBI" id="CHEBI:29108"/>
    </ligand>
</feature>
<feature type="binding site" evidence="1">
    <location>
        <position position="16"/>
    </location>
    <ligand>
        <name>Ca(2+)</name>
        <dbReference type="ChEBI" id="CHEBI:29108"/>
    </ligand>
</feature>
<feature type="binding site" evidence="1">
    <location>
        <position position="124"/>
    </location>
    <ligand>
        <name>Ca(2+)</name>
        <dbReference type="ChEBI" id="CHEBI:29108"/>
    </ligand>
</feature>
<feature type="binding site" evidence="1">
    <location>
        <position position="227"/>
    </location>
    <ligand>
        <name>substrate</name>
    </ligand>
</feature>
<feature type="binding site" evidence="1">
    <location>
        <position position="239"/>
    </location>
    <ligand>
        <name>substrate</name>
    </ligand>
</feature>
<feature type="binding site" evidence="1">
    <location>
        <position position="240"/>
    </location>
    <ligand>
        <name>Ca(2+)</name>
        <dbReference type="ChEBI" id="CHEBI:29108"/>
    </ligand>
</feature>
<accession>A1AD20</accession>
<evidence type="ECO:0000255" key="1">
    <source>
        <dbReference type="HAMAP-Rule" id="MF_01433"/>
    </source>
</evidence>
<sequence>MEKRKIILDCDPGHDDAIAIMMAAKHPAIDLLGITIVAGNQTLDKTLINGLNVCQKLEINVPVYAGMPQPIMRQQIVADNIHGETGLDGPVFEPLTRQAENTHAVKYIIDTLMASDGDITLVPVGPLSNIAVAMRMQPAILPKIREIVLMGGAYGTGNFTPSAEFNIFADPEAARVVFTSGVPLVMMGLDLTNQTVCTPDVIARMERAGGPAGELFSDIMNFTLKTQFENYGLAGGPVHDATCIGYLINPDGIKTQEMYVEVDVNSGPCYGRTVCDELGVLGKPANTKVGITIDTDWFWGLVEECVRGYIKTH</sequence>
<dbReference type="EC" id="3.2.2.8" evidence="1"/>
<dbReference type="EMBL" id="CP000468">
    <property type="protein sequence ID" value="ABJ01560.1"/>
    <property type="molecule type" value="Genomic_DNA"/>
</dbReference>
<dbReference type="RefSeq" id="WP_000415422.1">
    <property type="nucleotide sequence ID" value="NZ_CADILS010000004.1"/>
</dbReference>
<dbReference type="SMR" id="A1AD20"/>
<dbReference type="GeneID" id="75056720"/>
<dbReference type="KEGG" id="ecv:APECO1_43912"/>
<dbReference type="HOGENOM" id="CLU_036838_2_0_6"/>
<dbReference type="Proteomes" id="UP000008216">
    <property type="component" value="Chromosome"/>
</dbReference>
<dbReference type="GO" id="GO:0005829">
    <property type="term" value="C:cytosol"/>
    <property type="evidence" value="ECO:0007669"/>
    <property type="project" value="TreeGrafter"/>
</dbReference>
<dbReference type="GO" id="GO:0005509">
    <property type="term" value="F:calcium ion binding"/>
    <property type="evidence" value="ECO:0007669"/>
    <property type="project" value="UniProtKB-UniRule"/>
</dbReference>
<dbReference type="GO" id="GO:0008477">
    <property type="term" value="F:purine nucleosidase activity"/>
    <property type="evidence" value="ECO:0007669"/>
    <property type="project" value="TreeGrafter"/>
</dbReference>
<dbReference type="GO" id="GO:0045437">
    <property type="term" value="F:uridine nucleosidase activity"/>
    <property type="evidence" value="ECO:0007669"/>
    <property type="project" value="UniProtKB-ARBA"/>
</dbReference>
<dbReference type="GO" id="GO:0006152">
    <property type="term" value="P:purine nucleoside catabolic process"/>
    <property type="evidence" value="ECO:0007669"/>
    <property type="project" value="TreeGrafter"/>
</dbReference>
<dbReference type="GO" id="GO:0006206">
    <property type="term" value="P:pyrimidine nucleobase metabolic process"/>
    <property type="evidence" value="ECO:0007669"/>
    <property type="project" value="UniProtKB-UniRule"/>
</dbReference>
<dbReference type="GO" id="GO:0046133">
    <property type="term" value="P:pyrimidine ribonucleoside catabolic process"/>
    <property type="evidence" value="ECO:0007669"/>
    <property type="project" value="InterPro"/>
</dbReference>
<dbReference type="CDD" id="cd02651">
    <property type="entry name" value="nuc_hydro_IU_UC_XIUA"/>
    <property type="match status" value="1"/>
</dbReference>
<dbReference type="FunFam" id="3.90.245.10:FF:000003">
    <property type="entry name" value="Pyrimidine-specific ribonucleoside hydrolase RihB"/>
    <property type="match status" value="1"/>
</dbReference>
<dbReference type="Gene3D" id="3.90.245.10">
    <property type="entry name" value="Ribonucleoside hydrolase-like"/>
    <property type="match status" value="1"/>
</dbReference>
<dbReference type="HAMAP" id="MF_01433">
    <property type="entry name" value="Pyrim_hydro_RihB"/>
    <property type="match status" value="1"/>
</dbReference>
<dbReference type="InterPro" id="IPR015910">
    <property type="entry name" value="I/U_nuclsd_hydro_CS"/>
</dbReference>
<dbReference type="InterPro" id="IPR001910">
    <property type="entry name" value="Inosine/uridine_hydrolase_dom"/>
</dbReference>
<dbReference type="InterPro" id="IPR023186">
    <property type="entry name" value="IUNH"/>
</dbReference>
<dbReference type="InterPro" id="IPR022977">
    <property type="entry name" value="Pyrim_hydro_RihB"/>
</dbReference>
<dbReference type="InterPro" id="IPR036452">
    <property type="entry name" value="Ribo_hydro-like"/>
</dbReference>
<dbReference type="NCBIfam" id="NF007417">
    <property type="entry name" value="PRK09955.1"/>
    <property type="match status" value="1"/>
</dbReference>
<dbReference type="PANTHER" id="PTHR12304">
    <property type="entry name" value="INOSINE-URIDINE PREFERRING NUCLEOSIDE HYDROLASE"/>
    <property type="match status" value="1"/>
</dbReference>
<dbReference type="PANTHER" id="PTHR12304:SF4">
    <property type="entry name" value="URIDINE NUCLEOSIDASE"/>
    <property type="match status" value="1"/>
</dbReference>
<dbReference type="Pfam" id="PF01156">
    <property type="entry name" value="IU_nuc_hydro"/>
    <property type="match status" value="1"/>
</dbReference>
<dbReference type="SUPFAM" id="SSF53590">
    <property type="entry name" value="Nucleoside hydrolase"/>
    <property type="match status" value="1"/>
</dbReference>
<dbReference type="PROSITE" id="PS01247">
    <property type="entry name" value="IUNH"/>
    <property type="match status" value="1"/>
</dbReference>
<comment type="function">
    <text evidence="1">Hydrolyzes cytidine or uridine to ribose and cytosine or uracil, respectively. Has a clear preference for cytidine over uridine. Strictly specific for ribonucleosides.</text>
</comment>
<comment type="catalytic activity">
    <reaction evidence="1">
        <text>a pyrimidine ribonucleoside + H2O = a pyrimidine nucleobase + D-ribose</text>
        <dbReference type="Rhea" id="RHEA:56816"/>
        <dbReference type="ChEBI" id="CHEBI:15377"/>
        <dbReference type="ChEBI" id="CHEBI:26432"/>
        <dbReference type="ChEBI" id="CHEBI:47013"/>
        <dbReference type="ChEBI" id="CHEBI:141014"/>
        <dbReference type="EC" id="3.2.2.8"/>
    </reaction>
</comment>
<comment type="cofactor">
    <cofactor evidence="1">
        <name>Ca(2+)</name>
        <dbReference type="ChEBI" id="CHEBI:29108"/>
    </cofactor>
    <text evidence="1">Binds 1 Ca(2+) ion per monomer.</text>
</comment>
<comment type="subunit">
    <text evidence="1">Homotetramer.</text>
</comment>
<comment type="similarity">
    <text evidence="1">Belongs to the IUNH family. RihB subfamily.</text>
</comment>